<reference key="1">
    <citation type="journal article" date="2009" name="PLoS ONE">
        <title>Salmonella paratyphi C: genetic divergence from Salmonella choleraesuis and pathogenic convergence with Salmonella typhi.</title>
        <authorList>
            <person name="Liu W.-Q."/>
            <person name="Feng Y."/>
            <person name="Wang Y."/>
            <person name="Zou Q.-H."/>
            <person name="Chen F."/>
            <person name="Guo J.-T."/>
            <person name="Peng Y.-H."/>
            <person name="Jin Y."/>
            <person name="Li Y.-G."/>
            <person name="Hu S.-N."/>
            <person name="Johnston R.N."/>
            <person name="Liu G.-R."/>
            <person name="Liu S.-L."/>
        </authorList>
    </citation>
    <scope>NUCLEOTIDE SEQUENCE [LARGE SCALE GENOMIC DNA]</scope>
    <source>
        <strain>RKS4594</strain>
    </source>
</reference>
<organism>
    <name type="scientific">Salmonella paratyphi C (strain RKS4594)</name>
    <dbReference type="NCBI Taxonomy" id="476213"/>
    <lineage>
        <taxon>Bacteria</taxon>
        <taxon>Pseudomonadati</taxon>
        <taxon>Pseudomonadota</taxon>
        <taxon>Gammaproteobacteria</taxon>
        <taxon>Enterobacterales</taxon>
        <taxon>Enterobacteriaceae</taxon>
        <taxon>Salmonella</taxon>
    </lineage>
</organism>
<name>THIC_SALPC</name>
<sequence length="631" mass="70803">MSTTTLTRREQRAKAQHFIDTLEGTAFPNSKRIYVTGSQHDIRVPMREIQLSPTLIGGSKDNPQFEENEAVPVYDTSGPYGDPEVAINVQQGLAKLRQPWIDARNDSEELDDRSSAYTRERLADDGLDDLRFTGLLTPKRAKAGKCVTQLHYARKGIITPEMEFIAIRENMGRERIRSEVLRHQHPGMNFGARLPENITPEFVRDEVAAGRAIIPANINHPESEPMIIGRNFLVKVNANIGNSAVTSSIEEEVEKLVWSTRWGADTVMDLSTGRYIHETREWILRNSPVPIGTVPIYQALEKVNGIAEDLTWEAFRDTLLEQAEQGVDYFTIHAGVLLRYVPMTAKRLTGIVSRGGSIMAKWCLSHHKENFLFEHFREICEICAAYDISLSLGDGLRPGSIQDANDEAQFSELHTLGELTKIAWEYDVQVMIEGPGHVPMHMIQRNMTEELESCHEAPFYTLGPLTTDIAPGYDHFTSGIGAAMIGWFGCAMLCYVTPKEHLGLPNKEDVKQGLITYKIAAHAADLAKGHPGAQIRDNAMSKARFEFRWEDQFNLALDPFTARAYHDETLPQESGKVAHFCSMCGPKFCSMKISQEVRDYAAAQAIEVGMADMSENFRAKGGEIYLKREEV</sequence>
<comment type="function">
    <text evidence="1">Catalyzes the synthesis of the hydroxymethylpyrimidine phosphate (HMP-P) moiety of thiamine from aminoimidazole ribotide (AIR) in a radical S-adenosyl-L-methionine (SAM)-dependent reaction.</text>
</comment>
<comment type="catalytic activity">
    <reaction evidence="1">
        <text>5-amino-1-(5-phospho-beta-D-ribosyl)imidazole + S-adenosyl-L-methionine = 4-amino-2-methyl-5-(phosphooxymethyl)pyrimidine + CO + 5'-deoxyadenosine + formate + L-methionine + 3 H(+)</text>
        <dbReference type="Rhea" id="RHEA:24840"/>
        <dbReference type="ChEBI" id="CHEBI:15378"/>
        <dbReference type="ChEBI" id="CHEBI:15740"/>
        <dbReference type="ChEBI" id="CHEBI:17245"/>
        <dbReference type="ChEBI" id="CHEBI:17319"/>
        <dbReference type="ChEBI" id="CHEBI:57844"/>
        <dbReference type="ChEBI" id="CHEBI:58354"/>
        <dbReference type="ChEBI" id="CHEBI:59789"/>
        <dbReference type="ChEBI" id="CHEBI:137981"/>
        <dbReference type="EC" id="4.1.99.17"/>
    </reaction>
</comment>
<comment type="cofactor">
    <cofactor evidence="1">
        <name>[4Fe-4S] cluster</name>
        <dbReference type="ChEBI" id="CHEBI:49883"/>
    </cofactor>
    <text evidence="1">Binds 1 [4Fe-4S] cluster per subunit. The cluster is coordinated with 3 cysteines and an exchangeable S-adenosyl-L-methionine.</text>
</comment>
<comment type="pathway">
    <text evidence="1">Cofactor biosynthesis; thiamine diphosphate biosynthesis.</text>
</comment>
<comment type="subunit">
    <text evidence="1">Homodimer.</text>
</comment>
<comment type="similarity">
    <text evidence="1">Belongs to the ThiC family.</text>
</comment>
<protein>
    <recommendedName>
        <fullName evidence="1">Phosphomethylpyrimidine synthase</fullName>
        <ecNumber evidence="1">4.1.99.17</ecNumber>
    </recommendedName>
    <alternativeName>
        <fullName evidence="1">Hydroxymethylpyrimidine phosphate synthase</fullName>
        <shortName evidence="1">HMP-P synthase</shortName>
        <shortName evidence="1">HMP-phosphate synthase</shortName>
        <shortName evidence="1">HMPP synthase</shortName>
    </alternativeName>
    <alternativeName>
        <fullName evidence="1">Thiamine biosynthesis protein ThiC</fullName>
    </alternativeName>
</protein>
<gene>
    <name evidence="1" type="primary">thiC</name>
    <name type="ordered locus">SPC_3995</name>
</gene>
<keyword id="KW-0004">4Fe-4S</keyword>
<keyword id="KW-0408">Iron</keyword>
<keyword id="KW-0411">Iron-sulfur</keyword>
<keyword id="KW-0456">Lyase</keyword>
<keyword id="KW-0479">Metal-binding</keyword>
<keyword id="KW-0949">S-adenosyl-L-methionine</keyword>
<keyword id="KW-0784">Thiamine biosynthesis</keyword>
<keyword id="KW-0862">Zinc</keyword>
<dbReference type="EC" id="4.1.99.17" evidence="1"/>
<dbReference type="EMBL" id="CP000857">
    <property type="protein sequence ID" value="ACN48062.1"/>
    <property type="molecule type" value="Genomic_DNA"/>
</dbReference>
<dbReference type="RefSeq" id="WP_000108410.1">
    <property type="nucleotide sequence ID" value="NC_012125.1"/>
</dbReference>
<dbReference type="SMR" id="C0Q2S6"/>
<dbReference type="KEGG" id="sei:SPC_3995"/>
<dbReference type="HOGENOM" id="CLU_013181_2_1_6"/>
<dbReference type="UniPathway" id="UPA00060"/>
<dbReference type="Proteomes" id="UP000001599">
    <property type="component" value="Chromosome"/>
</dbReference>
<dbReference type="GO" id="GO:0005829">
    <property type="term" value="C:cytosol"/>
    <property type="evidence" value="ECO:0007669"/>
    <property type="project" value="TreeGrafter"/>
</dbReference>
<dbReference type="GO" id="GO:0051539">
    <property type="term" value="F:4 iron, 4 sulfur cluster binding"/>
    <property type="evidence" value="ECO:0007669"/>
    <property type="project" value="UniProtKB-KW"/>
</dbReference>
<dbReference type="GO" id="GO:0016830">
    <property type="term" value="F:carbon-carbon lyase activity"/>
    <property type="evidence" value="ECO:0007669"/>
    <property type="project" value="InterPro"/>
</dbReference>
<dbReference type="GO" id="GO:0008270">
    <property type="term" value="F:zinc ion binding"/>
    <property type="evidence" value="ECO:0007669"/>
    <property type="project" value="UniProtKB-UniRule"/>
</dbReference>
<dbReference type="GO" id="GO:0009228">
    <property type="term" value="P:thiamine biosynthetic process"/>
    <property type="evidence" value="ECO:0007669"/>
    <property type="project" value="UniProtKB-KW"/>
</dbReference>
<dbReference type="GO" id="GO:0009229">
    <property type="term" value="P:thiamine diphosphate biosynthetic process"/>
    <property type="evidence" value="ECO:0007669"/>
    <property type="project" value="UniProtKB-UniRule"/>
</dbReference>
<dbReference type="FunFam" id="3.20.20.540:FF:000001">
    <property type="entry name" value="Phosphomethylpyrimidine synthase"/>
    <property type="match status" value="1"/>
</dbReference>
<dbReference type="Gene3D" id="6.10.250.620">
    <property type="match status" value="1"/>
</dbReference>
<dbReference type="Gene3D" id="3.20.20.540">
    <property type="entry name" value="Radical SAM ThiC family, central domain"/>
    <property type="match status" value="1"/>
</dbReference>
<dbReference type="HAMAP" id="MF_00089">
    <property type="entry name" value="ThiC"/>
    <property type="match status" value="1"/>
</dbReference>
<dbReference type="InterPro" id="IPR037509">
    <property type="entry name" value="ThiC"/>
</dbReference>
<dbReference type="InterPro" id="IPR025747">
    <property type="entry name" value="ThiC-associated_dom"/>
</dbReference>
<dbReference type="InterPro" id="IPR038521">
    <property type="entry name" value="ThiC/Bza_core_dom"/>
</dbReference>
<dbReference type="InterPro" id="IPR002817">
    <property type="entry name" value="ThiC/BzaA/B"/>
</dbReference>
<dbReference type="NCBIfam" id="NF006763">
    <property type="entry name" value="PRK09284.1"/>
    <property type="match status" value="1"/>
</dbReference>
<dbReference type="NCBIfam" id="NF009895">
    <property type="entry name" value="PRK13352.1"/>
    <property type="match status" value="1"/>
</dbReference>
<dbReference type="NCBIfam" id="TIGR00190">
    <property type="entry name" value="thiC"/>
    <property type="match status" value="1"/>
</dbReference>
<dbReference type="PANTHER" id="PTHR30557:SF1">
    <property type="entry name" value="PHOSPHOMETHYLPYRIMIDINE SYNTHASE, CHLOROPLASTIC"/>
    <property type="match status" value="1"/>
</dbReference>
<dbReference type="PANTHER" id="PTHR30557">
    <property type="entry name" value="THIAMINE BIOSYNTHESIS PROTEIN THIC"/>
    <property type="match status" value="1"/>
</dbReference>
<dbReference type="Pfam" id="PF13667">
    <property type="entry name" value="ThiC-associated"/>
    <property type="match status" value="1"/>
</dbReference>
<dbReference type="Pfam" id="PF01964">
    <property type="entry name" value="ThiC_Rad_SAM"/>
    <property type="match status" value="1"/>
</dbReference>
<dbReference type="SFLD" id="SFLDF00407">
    <property type="entry name" value="phosphomethylpyrimidine_syntha"/>
    <property type="match status" value="1"/>
</dbReference>
<dbReference type="SFLD" id="SFLDG01114">
    <property type="entry name" value="phosphomethylpyrimidine_syntha"/>
    <property type="match status" value="1"/>
</dbReference>
<dbReference type="SFLD" id="SFLDS00113">
    <property type="entry name" value="Radical_SAM_Phosphomethylpyrim"/>
    <property type="match status" value="1"/>
</dbReference>
<feature type="chain" id="PRO_1000198064" description="Phosphomethylpyrimidine synthase">
    <location>
        <begin position="1"/>
        <end position="631"/>
    </location>
</feature>
<feature type="binding site" evidence="1">
    <location>
        <position position="239"/>
    </location>
    <ligand>
        <name>substrate</name>
    </ligand>
</feature>
<feature type="binding site" evidence="1">
    <location>
        <position position="268"/>
    </location>
    <ligand>
        <name>substrate</name>
    </ligand>
</feature>
<feature type="binding site" evidence="1">
    <location>
        <position position="297"/>
    </location>
    <ligand>
        <name>substrate</name>
    </ligand>
</feature>
<feature type="binding site" evidence="1">
    <location>
        <position position="333"/>
    </location>
    <ligand>
        <name>substrate</name>
    </ligand>
</feature>
<feature type="binding site" evidence="1">
    <location>
        <begin position="353"/>
        <end position="355"/>
    </location>
    <ligand>
        <name>substrate</name>
    </ligand>
</feature>
<feature type="binding site" evidence="1">
    <location>
        <begin position="394"/>
        <end position="397"/>
    </location>
    <ligand>
        <name>substrate</name>
    </ligand>
</feature>
<feature type="binding site" evidence="1">
    <location>
        <position position="433"/>
    </location>
    <ligand>
        <name>substrate</name>
    </ligand>
</feature>
<feature type="binding site" evidence="1">
    <location>
        <position position="437"/>
    </location>
    <ligand>
        <name>Zn(2+)</name>
        <dbReference type="ChEBI" id="CHEBI:29105"/>
    </ligand>
</feature>
<feature type="binding site" evidence="1">
    <location>
        <position position="460"/>
    </location>
    <ligand>
        <name>substrate</name>
    </ligand>
</feature>
<feature type="binding site" evidence="1">
    <location>
        <position position="501"/>
    </location>
    <ligand>
        <name>Zn(2+)</name>
        <dbReference type="ChEBI" id="CHEBI:29105"/>
    </ligand>
</feature>
<feature type="binding site" evidence="1">
    <location>
        <position position="581"/>
    </location>
    <ligand>
        <name>[4Fe-4S] cluster</name>
        <dbReference type="ChEBI" id="CHEBI:49883"/>
        <note>4Fe-4S-S-AdoMet</note>
    </ligand>
</feature>
<feature type="binding site" evidence="1">
    <location>
        <position position="584"/>
    </location>
    <ligand>
        <name>[4Fe-4S] cluster</name>
        <dbReference type="ChEBI" id="CHEBI:49883"/>
        <note>4Fe-4S-S-AdoMet</note>
    </ligand>
</feature>
<feature type="binding site" evidence="1">
    <location>
        <position position="589"/>
    </location>
    <ligand>
        <name>[4Fe-4S] cluster</name>
        <dbReference type="ChEBI" id="CHEBI:49883"/>
        <note>4Fe-4S-S-AdoMet</note>
    </ligand>
</feature>
<accession>C0Q2S6</accession>
<proteinExistence type="inferred from homology"/>
<evidence type="ECO:0000255" key="1">
    <source>
        <dbReference type="HAMAP-Rule" id="MF_00089"/>
    </source>
</evidence>